<name>TXX1A_ETHRU</name>
<dbReference type="EMBL" id="KF130739">
    <property type="protein sequence ID" value="AHY22590.1"/>
    <property type="molecule type" value="mRNA"/>
</dbReference>
<dbReference type="EMBL" id="KF130740">
    <property type="protein sequence ID" value="AHY22591.1"/>
    <property type="molecule type" value="mRNA"/>
</dbReference>
<dbReference type="EMBL" id="KF130741">
    <property type="protein sequence ID" value="AHY22592.1"/>
    <property type="molecule type" value="mRNA"/>
</dbReference>
<dbReference type="EMBL" id="KF130742">
    <property type="protein sequence ID" value="AHY22593.1"/>
    <property type="molecule type" value="mRNA"/>
</dbReference>
<dbReference type="EMBL" id="KF130743">
    <property type="protein sequence ID" value="AHY22594.1"/>
    <property type="molecule type" value="mRNA"/>
</dbReference>
<dbReference type="EMBL" id="KF130746">
    <property type="protein sequence ID" value="AHY22597.1"/>
    <property type="molecule type" value="mRNA"/>
</dbReference>
<dbReference type="EMBL" id="KF130747">
    <property type="protein sequence ID" value="AHY22598.1"/>
    <property type="molecule type" value="mRNA"/>
</dbReference>
<dbReference type="EMBL" id="KF130748">
    <property type="protein sequence ID" value="AHY22599.1"/>
    <property type="molecule type" value="mRNA"/>
</dbReference>
<dbReference type="GO" id="GO:0005576">
    <property type="term" value="C:extracellular region"/>
    <property type="evidence" value="ECO:0007669"/>
    <property type="project" value="UniProtKB-SubCell"/>
</dbReference>
<dbReference type="GO" id="GO:0090729">
    <property type="term" value="F:toxin activity"/>
    <property type="evidence" value="ECO:0007669"/>
    <property type="project" value="UniProtKB-KW"/>
</dbReference>
<protein>
    <recommendedName>
        <fullName evidence="4">U-scoloptoxin(XY)-Er1a</fullName>
        <shortName evidence="4">U-SLPTX(XY)-Er1a</shortName>
    </recommendedName>
    <alternativeName>
        <fullName>U-scoloptoxin-Er4.1a2a</fullName>
        <shortName evidence="6">U-SLPTX-Er4.1a2a</shortName>
    </alternativeName>
    <component>
        <recommendedName>
            <fullName evidence="3">U-scoloptoxin-Er2.1a</fullName>
        </recommendedName>
    </component>
    <component>
        <recommendedName>
            <fullName evidence="3">U-scoloptoxin-Er2.2a</fullName>
        </recommendedName>
    </component>
</protein>
<accession>A0A023W140</accession>
<accession>A0A023VZG5</accession>
<accession>A0A023VZP7</accession>
<accession>A0A023W0V0</accession>
<keyword id="KW-0165">Cleavage on pair of basic residues</keyword>
<keyword id="KW-0903">Direct protein sequencing</keyword>
<keyword id="KW-1015">Disulfide bond</keyword>
<keyword id="KW-0964">Secreted</keyword>
<keyword id="KW-0732">Signal</keyword>
<keyword id="KW-0800">Toxin</keyword>
<comment type="subcellular location">
    <subcellularLocation>
        <location evidence="2">Secreted</location>
    </subcellularLocation>
    <text evidence="2">The mature toxins are clearly liberated from the multidomain precursors in the venom gland prior to venom expulsion and not by venom proteases upon secretion.</text>
</comment>
<comment type="tissue specificity">
    <text evidence="5">Expressed by the venom gland.</text>
</comment>
<comment type="PTM">
    <text evidence="4">Contains 3 disulfide bonds.</text>
</comment>
<comment type="similarity">
    <text evidence="4">Belongs to the scoloptoxin-XY family.</text>
</comment>
<organism>
    <name type="scientific">Ethmostigmus rubripes</name>
    <name type="common">Giant centipede</name>
    <dbReference type="NCBI Taxonomy" id="62613"/>
    <lineage>
        <taxon>Eukaryota</taxon>
        <taxon>Metazoa</taxon>
        <taxon>Ecdysozoa</taxon>
        <taxon>Arthropoda</taxon>
        <taxon>Myriapoda</taxon>
        <taxon>Chilopoda</taxon>
        <taxon>Pleurostigmophora</taxon>
        <taxon>Scolopendromorpha</taxon>
        <taxon>Scolopendridae</taxon>
        <taxon>Ethmostigmus</taxon>
    </lineage>
</organism>
<sequence>MASQVVLSFALVVVLAVFVGQVDSCPSDCKCDYRSSQCRPANDDVHPNVCIDHYCVVMNLAKREQRPELSPGAWDDSSEEKDNEASLA</sequence>
<reference key="1">
    <citation type="journal article" date="2014" name="J. Proteomics">
        <title>Multifunctional warheads: diversification of the toxin arsenal of centipedes via novel multidomain transcripts.</title>
        <authorList>
            <person name="Undheim E.A."/>
            <person name="Sunagar K."/>
            <person name="Hamilton B.R."/>
            <person name="Jones A."/>
            <person name="Venter D.J."/>
            <person name="Fry B.G."/>
            <person name="King G.F."/>
        </authorList>
    </citation>
    <scope>NUCLEOTIDE SEQUENCE [MRNA]</scope>
    <scope>PROTEIN SEQUENCE OF 25-61 AND 64-78</scope>
    <scope>IDENTIFICATION BY MASS SPECTROMETRY</scope>
    <scope>SUBCELLULAR LOCATION</scope>
    <source>
        <tissue>Venom</tissue>
        <tissue>Venom gland</tissue>
    </source>
</reference>
<feature type="signal peptide" evidence="2">
    <location>
        <begin position="1"/>
        <end position="24"/>
    </location>
</feature>
<feature type="chain" id="PRO_5007368311" description="U-scoloptoxin-Er2.1a" evidence="2">
    <location>
        <begin position="25"/>
        <end position="61"/>
    </location>
</feature>
<feature type="peptide" id="PRO_0000446850" description="U-scoloptoxin-Er2.2a" evidence="2">
    <location>
        <begin position="64"/>
        <end position="78"/>
    </location>
</feature>
<feature type="propeptide" id="PRO_0000446851" evidence="5">
    <location>
        <begin position="79"/>
        <end position="88"/>
    </location>
</feature>
<feature type="region of interest" description="Disordered" evidence="1">
    <location>
        <begin position="66"/>
        <end position="88"/>
    </location>
</feature>
<proteinExistence type="evidence at protein level"/>
<evidence type="ECO:0000256" key="1">
    <source>
        <dbReference type="SAM" id="MobiDB-lite"/>
    </source>
</evidence>
<evidence type="ECO:0000269" key="2">
    <source>
    </source>
</evidence>
<evidence type="ECO:0000303" key="3">
    <source>
    </source>
</evidence>
<evidence type="ECO:0000305" key="4"/>
<evidence type="ECO:0000305" key="5">
    <source>
    </source>
</evidence>
<evidence type="ECO:0000312" key="6">
    <source>
        <dbReference type="EMBL" id="AHY22590.1"/>
    </source>
</evidence>